<dbReference type="EMBL" id="LT708304">
    <property type="protein sequence ID" value="SIU00690.1"/>
    <property type="molecule type" value="Genomic_DNA"/>
</dbReference>
<dbReference type="RefSeq" id="NP_855733.1">
    <property type="nucleotide sequence ID" value="NC_002945.3"/>
</dbReference>
<dbReference type="RefSeq" id="WP_003410628.1">
    <property type="nucleotide sequence ID" value="NC_002945.4"/>
</dbReference>
<dbReference type="SMR" id="P0A5W1"/>
<dbReference type="GeneID" id="45426035"/>
<dbReference type="KEGG" id="mbo:BQ2027_MB2083C"/>
<dbReference type="PATRIC" id="fig|233413.5.peg.2290"/>
<dbReference type="Proteomes" id="UP000001419">
    <property type="component" value="Chromosome"/>
</dbReference>
<dbReference type="GO" id="GO:0022625">
    <property type="term" value="C:cytosolic large ribosomal subunit"/>
    <property type="evidence" value="ECO:0007669"/>
    <property type="project" value="TreeGrafter"/>
</dbReference>
<dbReference type="GO" id="GO:0003735">
    <property type="term" value="F:structural constituent of ribosome"/>
    <property type="evidence" value="ECO:0007669"/>
    <property type="project" value="InterPro"/>
</dbReference>
<dbReference type="GO" id="GO:0006412">
    <property type="term" value="P:translation"/>
    <property type="evidence" value="ECO:0007669"/>
    <property type="project" value="UniProtKB-UniRule"/>
</dbReference>
<dbReference type="FunFam" id="2.20.28.120:FF:000002">
    <property type="entry name" value="50S ribosomal protein L33"/>
    <property type="match status" value="1"/>
</dbReference>
<dbReference type="Gene3D" id="2.20.28.120">
    <property type="entry name" value="Ribosomal protein L33"/>
    <property type="match status" value="1"/>
</dbReference>
<dbReference type="HAMAP" id="MF_00294">
    <property type="entry name" value="Ribosomal_bL33"/>
    <property type="match status" value="1"/>
</dbReference>
<dbReference type="InterPro" id="IPR001705">
    <property type="entry name" value="Ribosomal_bL33"/>
</dbReference>
<dbReference type="InterPro" id="IPR018264">
    <property type="entry name" value="Ribosomal_bL33_CS"/>
</dbReference>
<dbReference type="InterPro" id="IPR038584">
    <property type="entry name" value="Ribosomal_bL33_sf"/>
</dbReference>
<dbReference type="InterPro" id="IPR011332">
    <property type="entry name" value="Ribosomal_zn-bd"/>
</dbReference>
<dbReference type="NCBIfam" id="NF001860">
    <property type="entry name" value="PRK00595.1"/>
    <property type="match status" value="1"/>
</dbReference>
<dbReference type="NCBIfam" id="TIGR01023">
    <property type="entry name" value="rpmG_bact"/>
    <property type="match status" value="1"/>
</dbReference>
<dbReference type="PANTHER" id="PTHR15238">
    <property type="entry name" value="54S RIBOSOMAL PROTEIN L39, MITOCHONDRIAL"/>
    <property type="match status" value="1"/>
</dbReference>
<dbReference type="PANTHER" id="PTHR15238:SF1">
    <property type="entry name" value="LARGE RIBOSOMAL SUBUNIT PROTEIN BL33M"/>
    <property type="match status" value="1"/>
</dbReference>
<dbReference type="Pfam" id="PF00471">
    <property type="entry name" value="Ribosomal_L33"/>
    <property type="match status" value="1"/>
</dbReference>
<dbReference type="SUPFAM" id="SSF57829">
    <property type="entry name" value="Zn-binding ribosomal proteins"/>
    <property type="match status" value="1"/>
</dbReference>
<dbReference type="PROSITE" id="PS00582">
    <property type="entry name" value="RIBOSOMAL_L33"/>
    <property type="match status" value="1"/>
</dbReference>
<organism>
    <name type="scientific">Mycobacterium bovis (strain ATCC BAA-935 / AF2122/97)</name>
    <dbReference type="NCBI Taxonomy" id="233413"/>
    <lineage>
        <taxon>Bacteria</taxon>
        <taxon>Bacillati</taxon>
        <taxon>Actinomycetota</taxon>
        <taxon>Actinomycetes</taxon>
        <taxon>Mycobacteriales</taxon>
        <taxon>Mycobacteriaceae</taxon>
        <taxon>Mycobacterium</taxon>
        <taxon>Mycobacterium tuberculosis complex</taxon>
    </lineage>
</organism>
<keyword id="KW-1185">Reference proteome</keyword>
<keyword id="KW-0687">Ribonucleoprotein</keyword>
<keyword id="KW-0689">Ribosomal protein</keyword>
<evidence type="ECO:0000255" key="1">
    <source>
        <dbReference type="HAMAP-Rule" id="MF_00294"/>
    </source>
</evidence>
<evidence type="ECO:0000305" key="2"/>
<comment type="similarity">
    <text evidence="2">Belongs to the bacterial ribosomal protein bL33 family.</text>
</comment>
<accession>P0A5W1</accession>
<accession>A0A1R3Y051</accession>
<accession>O86356</accession>
<accession>X2BJX5</accession>
<gene>
    <name type="primary">rpmG1</name>
    <name type="synonym">rpmG</name>
    <name type="ordered locus">BQ2027_MB2083C</name>
</gene>
<sequence>MARTDIRPIVKLRSTAGTGYTYTTRKNRRNDPDRLILRKYDPILRRHVDFREER</sequence>
<reference key="1">
    <citation type="journal article" date="2003" name="Proc. Natl. Acad. Sci. U.S.A.">
        <title>The complete genome sequence of Mycobacterium bovis.</title>
        <authorList>
            <person name="Garnier T."/>
            <person name="Eiglmeier K."/>
            <person name="Camus J.-C."/>
            <person name="Medina N."/>
            <person name="Mansoor H."/>
            <person name="Pryor M."/>
            <person name="Duthoy S."/>
            <person name="Grondin S."/>
            <person name="Lacroix C."/>
            <person name="Monsempe C."/>
            <person name="Simon S."/>
            <person name="Harris B."/>
            <person name="Atkin R."/>
            <person name="Doggett J."/>
            <person name="Mayes R."/>
            <person name="Keating L."/>
            <person name="Wheeler P.R."/>
            <person name="Parkhill J."/>
            <person name="Barrell B.G."/>
            <person name="Cole S.T."/>
            <person name="Gordon S.V."/>
            <person name="Hewinson R.G."/>
        </authorList>
    </citation>
    <scope>NUCLEOTIDE SEQUENCE [LARGE SCALE GENOMIC DNA]</scope>
    <source>
        <strain>ATCC BAA-935 / AF2122/97</strain>
    </source>
</reference>
<reference key="2">
    <citation type="journal article" date="2017" name="Genome Announc.">
        <title>Updated reference genome sequence and annotation of Mycobacterium bovis AF2122/97.</title>
        <authorList>
            <person name="Malone K.M."/>
            <person name="Farrell D."/>
            <person name="Stuber T.P."/>
            <person name="Schubert O.T."/>
            <person name="Aebersold R."/>
            <person name="Robbe-Austerman S."/>
            <person name="Gordon S.V."/>
        </authorList>
    </citation>
    <scope>NUCLEOTIDE SEQUENCE [LARGE SCALE GENOMIC DNA]</scope>
    <scope>GENOME REANNOTATION</scope>
    <source>
        <strain>ATCC BAA-935 / AF2122/97</strain>
    </source>
</reference>
<proteinExistence type="inferred from homology"/>
<feature type="chain" id="PRO_0000170183" description="Large ribosomal subunit protein bL33A">
    <location>
        <begin position="1"/>
        <end position="54"/>
    </location>
</feature>
<name>RL331_MYCBO</name>
<protein>
    <recommendedName>
        <fullName evidence="1">Large ribosomal subunit protein bL33A</fullName>
    </recommendedName>
    <alternativeName>
        <fullName>50S ribosomal protein L33 1</fullName>
    </alternativeName>
</protein>